<protein>
    <recommendedName>
        <fullName evidence="1">Probable L-tyrosine/L-aspartate decarboxylase</fullName>
        <shortName evidence="1">TDC/ADC</shortName>
        <ecNumber evidence="1">4.1.1.11</ecNumber>
        <ecNumber evidence="1">4.1.1.25</ecNumber>
    </recommendedName>
</protein>
<comment type="function">
    <text evidence="1">Catalyzes the decarboxylation of L-tyrosine to produce tyramine for methanofuran biosynthesis. Can also catalyze the decarboxylation of L-aspartate to produce beta-alanine for coenzyme A (CoA) biosynthesis.</text>
</comment>
<comment type="catalytic activity">
    <reaction evidence="1">
        <text>L-tyrosine + H(+) = tyramine + CO2</text>
        <dbReference type="Rhea" id="RHEA:14345"/>
        <dbReference type="ChEBI" id="CHEBI:15378"/>
        <dbReference type="ChEBI" id="CHEBI:16526"/>
        <dbReference type="ChEBI" id="CHEBI:58315"/>
        <dbReference type="ChEBI" id="CHEBI:327995"/>
        <dbReference type="EC" id="4.1.1.25"/>
    </reaction>
</comment>
<comment type="catalytic activity">
    <reaction evidence="1">
        <text>L-aspartate + H(+) = beta-alanine + CO2</text>
        <dbReference type="Rhea" id="RHEA:19497"/>
        <dbReference type="ChEBI" id="CHEBI:15378"/>
        <dbReference type="ChEBI" id="CHEBI:16526"/>
        <dbReference type="ChEBI" id="CHEBI:29991"/>
        <dbReference type="ChEBI" id="CHEBI:57966"/>
        <dbReference type="EC" id="4.1.1.11"/>
    </reaction>
</comment>
<comment type="cofactor">
    <cofactor evidence="1">
        <name>pyridoxal 5'-phosphate</name>
        <dbReference type="ChEBI" id="CHEBI:597326"/>
    </cofactor>
</comment>
<comment type="pathway">
    <text evidence="1">Cofactor biosynthesis; methanofuran biosynthesis.</text>
</comment>
<comment type="pathway">
    <text evidence="1">Cofactor biosynthesis; coenzyme A biosynthesis.</text>
</comment>
<comment type="similarity">
    <text evidence="1">Belongs to the group II decarboxylase family. MfnA subfamily.</text>
</comment>
<gene>
    <name evidence="1" type="primary">mfnA</name>
    <name type="ordered locus">MTH_1116</name>
</gene>
<feature type="chain" id="PRO_0000147027" description="Probable L-tyrosine/L-aspartate decarboxylase">
    <location>
        <begin position="1"/>
        <end position="363"/>
    </location>
</feature>
<feature type="modified residue" description="N6-(pyridoxal phosphate)lysine" evidence="1">
    <location>
        <position position="208"/>
    </location>
</feature>
<dbReference type="EC" id="4.1.1.11" evidence="1"/>
<dbReference type="EC" id="4.1.1.25" evidence="1"/>
<dbReference type="EMBL" id="AE000666">
    <property type="protein sequence ID" value="AAB85605.1"/>
    <property type="molecule type" value="Genomic_DNA"/>
</dbReference>
<dbReference type="PIR" id="E69015">
    <property type="entry name" value="E69015"/>
</dbReference>
<dbReference type="SMR" id="O27188"/>
<dbReference type="FunCoup" id="O27188">
    <property type="interactions" value="169"/>
</dbReference>
<dbReference type="STRING" id="187420.MTH_1116"/>
<dbReference type="PaxDb" id="187420-MTH_1116"/>
<dbReference type="EnsemblBacteria" id="AAB85605">
    <property type="protein sequence ID" value="AAB85605"/>
    <property type="gene ID" value="MTH_1116"/>
</dbReference>
<dbReference type="KEGG" id="mth:MTH_1116"/>
<dbReference type="PATRIC" id="fig|187420.15.peg.1093"/>
<dbReference type="HOGENOM" id="CLU_028929_2_1_2"/>
<dbReference type="InParanoid" id="O27188"/>
<dbReference type="UniPathway" id="UPA00080"/>
<dbReference type="UniPathway" id="UPA00241"/>
<dbReference type="Proteomes" id="UP000005223">
    <property type="component" value="Chromosome"/>
</dbReference>
<dbReference type="GO" id="GO:0004068">
    <property type="term" value="F:aspartate 1-decarboxylase activity"/>
    <property type="evidence" value="ECO:0007669"/>
    <property type="project" value="UniProtKB-UniRule"/>
</dbReference>
<dbReference type="GO" id="GO:0030170">
    <property type="term" value="F:pyridoxal phosphate binding"/>
    <property type="evidence" value="ECO:0007669"/>
    <property type="project" value="UniProtKB-UniRule"/>
</dbReference>
<dbReference type="GO" id="GO:0004837">
    <property type="term" value="F:tyrosine decarboxylase activity"/>
    <property type="evidence" value="ECO:0007669"/>
    <property type="project" value="UniProtKB-UniRule"/>
</dbReference>
<dbReference type="GO" id="GO:0019752">
    <property type="term" value="P:carboxylic acid metabolic process"/>
    <property type="evidence" value="ECO:0007669"/>
    <property type="project" value="InterPro"/>
</dbReference>
<dbReference type="GO" id="GO:0015937">
    <property type="term" value="P:coenzyme A biosynthetic process"/>
    <property type="evidence" value="ECO:0007669"/>
    <property type="project" value="UniProtKB-UniRule"/>
</dbReference>
<dbReference type="GO" id="GO:2001120">
    <property type="term" value="P:methanofuran biosynthetic process"/>
    <property type="evidence" value="ECO:0007669"/>
    <property type="project" value="UniProtKB-UniRule"/>
</dbReference>
<dbReference type="Gene3D" id="3.90.1150.10">
    <property type="entry name" value="Aspartate Aminotransferase, domain 1"/>
    <property type="match status" value="1"/>
</dbReference>
<dbReference type="Gene3D" id="3.40.640.10">
    <property type="entry name" value="Type I PLP-dependent aspartate aminotransferase-like (Major domain)"/>
    <property type="match status" value="1"/>
</dbReference>
<dbReference type="HAMAP" id="MF_01610">
    <property type="entry name" value="MfnA_decarbox"/>
    <property type="match status" value="1"/>
</dbReference>
<dbReference type="InterPro" id="IPR050477">
    <property type="entry name" value="GrpII_AminoAcid_Decarb"/>
</dbReference>
<dbReference type="InterPro" id="IPR020931">
    <property type="entry name" value="MfnA"/>
</dbReference>
<dbReference type="InterPro" id="IPR002129">
    <property type="entry name" value="PyrdxlP-dep_de-COase"/>
</dbReference>
<dbReference type="InterPro" id="IPR015424">
    <property type="entry name" value="PyrdxlP-dep_Trfase"/>
</dbReference>
<dbReference type="InterPro" id="IPR015421">
    <property type="entry name" value="PyrdxlP-dep_Trfase_major"/>
</dbReference>
<dbReference type="InterPro" id="IPR015422">
    <property type="entry name" value="PyrdxlP-dep_Trfase_small"/>
</dbReference>
<dbReference type="NCBIfam" id="TIGR03812">
    <property type="entry name" value="tyr_de_CO2_Arch"/>
    <property type="match status" value="1"/>
</dbReference>
<dbReference type="PANTHER" id="PTHR42735">
    <property type="match status" value="1"/>
</dbReference>
<dbReference type="PANTHER" id="PTHR42735:SF6">
    <property type="entry name" value="SPHINGOSINE-1-PHOSPHATE LYASE 1"/>
    <property type="match status" value="1"/>
</dbReference>
<dbReference type="Pfam" id="PF00282">
    <property type="entry name" value="Pyridoxal_deC"/>
    <property type="match status" value="1"/>
</dbReference>
<dbReference type="SUPFAM" id="SSF53383">
    <property type="entry name" value="PLP-dependent transferases"/>
    <property type="match status" value="1"/>
</dbReference>
<evidence type="ECO:0000255" key="1">
    <source>
        <dbReference type="HAMAP-Rule" id="MF_01610"/>
    </source>
</evidence>
<accession>O27188</accession>
<proteinExistence type="inferred from homology"/>
<sequence length="363" mass="39902">MTYTSGRILGSMCTSSHPLARRVYCDFLESNLGDPGLFRGTRELESGVIGMLGELLSEPDAAGHIITGGTEANLMAMRAARNMAGAEKPEIIVPKSAHFSFRKAADILGLRLREAELDQDYRVDVESVRKLISENTVAVVGVAGTTELGRIDPVEELSEICLDEDIHLHIDAAFGGFIIPFLRETGAELPEFDFKLQGVSSITVDPHKMGLAPIPSGCILFRDASYLDAMSIETPYLTEKQQSTIVGTRTGASAAATWAIMKHMGREGYRKLALRVMGVTRRLRDGLVELDYQLVVEPELNIVAFNHPAMGPHELADRLEELGWAVSVSSCPPAIRVVLMPHIMEEHIELLLRDLEGIRLREE</sequence>
<keyword id="KW-0210">Decarboxylase</keyword>
<keyword id="KW-0456">Lyase</keyword>
<keyword id="KW-0663">Pyridoxal phosphate</keyword>
<keyword id="KW-1185">Reference proteome</keyword>
<name>MFNA_METTH</name>
<organism>
    <name type="scientific">Methanothermobacter thermautotrophicus (strain ATCC 29096 / DSM 1053 / JCM 10044 / NBRC 100330 / Delta H)</name>
    <name type="common">Methanobacterium thermoautotrophicum</name>
    <dbReference type="NCBI Taxonomy" id="187420"/>
    <lineage>
        <taxon>Archaea</taxon>
        <taxon>Methanobacteriati</taxon>
        <taxon>Methanobacteriota</taxon>
        <taxon>Methanomada group</taxon>
        <taxon>Methanobacteria</taxon>
        <taxon>Methanobacteriales</taxon>
        <taxon>Methanobacteriaceae</taxon>
        <taxon>Methanothermobacter</taxon>
    </lineage>
</organism>
<reference key="1">
    <citation type="journal article" date="1997" name="J. Bacteriol.">
        <title>Complete genome sequence of Methanobacterium thermoautotrophicum deltaH: functional analysis and comparative genomics.</title>
        <authorList>
            <person name="Smith D.R."/>
            <person name="Doucette-Stamm L.A."/>
            <person name="Deloughery C."/>
            <person name="Lee H.-M."/>
            <person name="Dubois J."/>
            <person name="Aldredge T."/>
            <person name="Bashirzadeh R."/>
            <person name="Blakely D."/>
            <person name="Cook R."/>
            <person name="Gilbert K."/>
            <person name="Harrison D."/>
            <person name="Hoang L."/>
            <person name="Keagle P."/>
            <person name="Lumm W."/>
            <person name="Pothier B."/>
            <person name="Qiu D."/>
            <person name="Spadafora R."/>
            <person name="Vicare R."/>
            <person name="Wang Y."/>
            <person name="Wierzbowski J."/>
            <person name="Gibson R."/>
            <person name="Jiwani N."/>
            <person name="Caruso A."/>
            <person name="Bush D."/>
            <person name="Safer H."/>
            <person name="Patwell D."/>
            <person name="Prabhakar S."/>
            <person name="McDougall S."/>
            <person name="Shimer G."/>
            <person name="Goyal A."/>
            <person name="Pietrovski S."/>
            <person name="Church G.M."/>
            <person name="Daniels C.J."/>
            <person name="Mao J.-I."/>
            <person name="Rice P."/>
            <person name="Noelling J."/>
            <person name="Reeve J.N."/>
        </authorList>
    </citation>
    <scope>NUCLEOTIDE SEQUENCE [LARGE SCALE GENOMIC DNA]</scope>
    <source>
        <strain>ATCC 29096 / DSM 1053 / JCM 10044 / NBRC 100330 / Delta H</strain>
    </source>
</reference>